<keyword id="KW-0963">Cytoplasm</keyword>
<keyword id="KW-0671">Queuosine biosynthesis</keyword>
<keyword id="KW-0949">S-adenosyl-L-methionine</keyword>
<keyword id="KW-0808">Transferase</keyword>
<protein>
    <recommendedName>
        <fullName evidence="1">S-adenosylmethionine:tRNA ribosyltransferase-isomerase</fullName>
        <ecNumber evidence="1">2.4.99.17</ecNumber>
    </recommendedName>
    <alternativeName>
        <fullName evidence="1">Queuosine biosynthesis protein QueA</fullName>
    </alternativeName>
</protein>
<reference key="1">
    <citation type="journal article" date="2009" name="Proc. Natl. Acad. Sci. U.S.A.">
        <title>Hamiltonella defensa, genome evolution of protective bacterial endosymbiont from pathogenic ancestors.</title>
        <authorList>
            <person name="Degnan P.H."/>
            <person name="Yu Y."/>
            <person name="Sisneros N."/>
            <person name="Wing R.A."/>
            <person name="Moran N.A."/>
        </authorList>
    </citation>
    <scope>NUCLEOTIDE SEQUENCE [LARGE SCALE GENOMIC DNA]</scope>
    <source>
        <strain>5AT</strain>
    </source>
</reference>
<comment type="function">
    <text evidence="1">Transfers and isomerizes the ribose moiety from AdoMet to the 7-aminomethyl group of 7-deazaguanine (preQ1-tRNA) to give epoxyqueuosine (oQ-tRNA).</text>
</comment>
<comment type="catalytic activity">
    <reaction evidence="1">
        <text>7-aminomethyl-7-carbaguanosine(34) in tRNA + S-adenosyl-L-methionine = epoxyqueuosine(34) in tRNA + adenine + L-methionine + 2 H(+)</text>
        <dbReference type="Rhea" id="RHEA:32155"/>
        <dbReference type="Rhea" id="RHEA-COMP:10342"/>
        <dbReference type="Rhea" id="RHEA-COMP:18582"/>
        <dbReference type="ChEBI" id="CHEBI:15378"/>
        <dbReference type="ChEBI" id="CHEBI:16708"/>
        <dbReference type="ChEBI" id="CHEBI:57844"/>
        <dbReference type="ChEBI" id="CHEBI:59789"/>
        <dbReference type="ChEBI" id="CHEBI:82833"/>
        <dbReference type="ChEBI" id="CHEBI:194443"/>
        <dbReference type="EC" id="2.4.99.17"/>
    </reaction>
</comment>
<comment type="pathway">
    <text evidence="1">tRNA modification; tRNA-queuosine biosynthesis.</text>
</comment>
<comment type="subunit">
    <text evidence="1">Monomer.</text>
</comment>
<comment type="subcellular location">
    <subcellularLocation>
        <location evidence="1">Cytoplasm</location>
    </subcellularLocation>
</comment>
<comment type="similarity">
    <text evidence="1">Belongs to the QueA family.</text>
</comment>
<accession>C4K8M4</accession>
<gene>
    <name evidence="1" type="primary">queA</name>
    <name type="ordered locus">HDEF_0086</name>
</gene>
<proteinExistence type="inferred from homology"/>
<dbReference type="EC" id="2.4.99.17" evidence="1"/>
<dbReference type="EMBL" id="CP001277">
    <property type="protein sequence ID" value="ACQ66861.1"/>
    <property type="molecule type" value="Genomic_DNA"/>
</dbReference>
<dbReference type="RefSeq" id="WP_012737826.1">
    <property type="nucleotide sequence ID" value="NC_012751.1"/>
</dbReference>
<dbReference type="SMR" id="C4K8M4"/>
<dbReference type="STRING" id="572265.HDEF_0086"/>
<dbReference type="GeneID" id="66260027"/>
<dbReference type="KEGG" id="hde:HDEF_0086"/>
<dbReference type="eggNOG" id="COG0809">
    <property type="taxonomic scope" value="Bacteria"/>
</dbReference>
<dbReference type="HOGENOM" id="CLU_039110_1_0_6"/>
<dbReference type="UniPathway" id="UPA00392"/>
<dbReference type="Proteomes" id="UP000002334">
    <property type="component" value="Chromosome"/>
</dbReference>
<dbReference type="GO" id="GO:0005737">
    <property type="term" value="C:cytoplasm"/>
    <property type="evidence" value="ECO:0007669"/>
    <property type="project" value="UniProtKB-SubCell"/>
</dbReference>
<dbReference type="GO" id="GO:0051075">
    <property type="term" value="F:S-adenosylmethionine:tRNA ribosyltransferase-isomerase activity"/>
    <property type="evidence" value="ECO:0007669"/>
    <property type="project" value="UniProtKB-EC"/>
</dbReference>
<dbReference type="GO" id="GO:0008616">
    <property type="term" value="P:queuosine biosynthetic process"/>
    <property type="evidence" value="ECO:0007669"/>
    <property type="project" value="UniProtKB-UniRule"/>
</dbReference>
<dbReference type="GO" id="GO:0002099">
    <property type="term" value="P:tRNA wobble guanine modification"/>
    <property type="evidence" value="ECO:0007669"/>
    <property type="project" value="TreeGrafter"/>
</dbReference>
<dbReference type="FunFam" id="3.40.1780.10:FF:000001">
    <property type="entry name" value="S-adenosylmethionine:tRNA ribosyltransferase-isomerase"/>
    <property type="match status" value="1"/>
</dbReference>
<dbReference type="Gene3D" id="2.40.10.240">
    <property type="entry name" value="QueA-like"/>
    <property type="match status" value="1"/>
</dbReference>
<dbReference type="Gene3D" id="3.40.1780.10">
    <property type="entry name" value="QueA-like"/>
    <property type="match status" value="1"/>
</dbReference>
<dbReference type="HAMAP" id="MF_00113">
    <property type="entry name" value="QueA"/>
    <property type="match status" value="1"/>
</dbReference>
<dbReference type="InterPro" id="IPR003699">
    <property type="entry name" value="QueA"/>
</dbReference>
<dbReference type="InterPro" id="IPR042118">
    <property type="entry name" value="QueA_dom1"/>
</dbReference>
<dbReference type="InterPro" id="IPR042119">
    <property type="entry name" value="QueA_dom2"/>
</dbReference>
<dbReference type="InterPro" id="IPR036100">
    <property type="entry name" value="QueA_sf"/>
</dbReference>
<dbReference type="NCBIfam" id="NF001140">
    <property type="entry name" value="PRK00147.1"/>
    <property type="match status" value="1"/>
</dbReference>
<dbReference type="NCBIfam" id="TIGR00113">
    <property type="entry name" value="queA"/>
    <property type="match status" value="1"/>
</dbReference>
<dbReference type="PANTHER" id="PTHR30307">
    <property type="entry name" value="S-ADENOSYLMETHIONINE:TRNA RIBOSYLTRANSFERASE-ISOMERASE"/>
    <property type="match status" value="1"/>
</dbReference>
<dbReference type="PANTHER" id="PTHR30307:SF0">
    <property type="entry name" value="S-ADENOSYLMETHIONINE:TRNA RIBOSYLTRANSFERASE-ISOMERASE"/>
    <property type="match status" value="1"/>
</dbReference>
<dbReference type="Pfam" id="PF02547">
    <property type="entry name" value="Queuosine_synth"/>
    <property type="match status" value="1"/>
</dbReference>
<dbReference type="SUPFAM" id="SSF111337">
    <property type="entry name" value="QueA-like"/>
    <property type="match status" value="1"/>
</dbReference>
<sequence>MRLSDFSFELPESLVAQYPLEKRSDCRLLCLNGETGTMTEGVFTDLLYQLEQGDLLVLNNTRVIPARVFGRKPSGGKLEILVERILSPNRVLVHLKSSKTPKLGAQFLLGDTANIPVTLMARHASLFELRFDVREDALMLLQSIGHIPLPPYIPRADEPKDHELYQTVYGQHLGAVAAPTAGLHFDNPLLNALKARGIETAFVTLHVGAGTFQPVKTDNITEHVMHSEYAEVSQEVVDAVLACKARGKRVVAVGTTSVRSLETAAQKTKNSFLTPFSGETSIFIYPGYQYQIVDALITNFHLPKSTLIMLVCAFAGYQNTLRAYKKAIDEKYRFFSYGDAMFISHNPKAAQENRVKK</sequence>
<feature type="chain" id="PRO_1000202954" description="S-adenosylmethionine:tRNA ribosyltransferase-isomerase">
    <location>
        <begin position="1"/>
        <end position="357"/>
    </location>
</feature>
<evidence type="ECO:0000255" key="1">
    <source>
        <dbReference type="HAMAP-Rule" id="MF_00113"/>
    </source>
</evidence>
<name>QUEA_HAMD5</name>
<organism>
    <name type="scientific">Hamiltonella defensa subsp. Acyrthosiphon pisum (strain 5AT)</name>
    <dbReference type="NCBI Taxonomy" id="572265"/>
    <lineage>
        <taxon>Bacteria</taxon>
        <taxon>Pseudomonadati</taxon>
        <taxon>Pseudomonadota</taxon>
        <taxon>Gammaproteobacteria</taxon>
        <taxon>Enterobacterales</taxon>
        <taxon>Enterobacteriaceae</taxon>
        <taxon>aphid secondary symbionts</taxon>
        <taxon>Candidatus Hamiltonella</taxon>
    </lineage>
</organism>